<organism>
    <name type="scientific">Limosilactobacillus reuteri subsp. reuteri (strain JCM 1112)</name>
    <name type="common">Lactobacillus reuteri</name>
    <dbReference type="NCBI Taxonomy" id="557433"/>
    <lineage>
        <taxon>Bacteria</taxon>
        <taxon>Bacillati</taxon>
        <taxon>Bacillota</taxon>
        <taxon>Bacilli</taxon>
        <taxon>Lactobacillales</taxon>
        <taxon>Lactobacillaceae</taxon>
        <taxon>Limosilactobacillus</taxon>
    </lineage>
</organism>
<evidence type="ECO:0000255" key="1">
    <source>
        <dbReference type="HAMAP-Rule" id="MF_00144"/>
    </source>
</evidence>
<gene>
    <name evidence="1" type="primary">mnmA</name>
    <name type="ordered locus">LAR_0585</name>
</gene>
<dbReference type="EC" id="2.8.1.13" evidence="1"/>
<dbReference type="EMBL" id="AP007281">
    <property type="protein sequence ID" value="BAG25101.1"/>
    <property type="molecule type" value="Genomic_DNA"/>
</dbReference>
<dbReference type="RefSeq" id="WP_003668307.1">
    <property type="nucleotide sequence ID" value="NC_010609.1"/>
</dbReference>
<dbReference type="SMR" id="B2G6L9"/>
<dbReference type="GeneID" id="77190715"/>
<dbReference type="KEGG" id="lrf:LAR_0585"/>
<dbReference type="HOGENOM" id="CLU_035188_1_0_9"/>
<dbReference type="GO" id="GO:0005737">
    <property type="term" value="C:cytoplasm"/>
    <property type="evidence" value="ECO:0007669"/>
    <property type="project" value="UniProtKB-SubCell"/>
</dbReference>
<dbReference type="GO" id="GO:0005524">
    <property type="term" value="F:ATP binding"/>
    <property type="evidence" value="ECO:0007669"/>
    <property type="project" value="UniProtKB-KW"/>
</dbReference>
<dbReference type="GO" id="GO:0000049">
    <property type="term" value="F:tRNA binding"/>
    <property type="evidence" value="ECO:0007669"/>
    <property type="project" value="UniProtKB-KW"/>
</dbReference>
<dbReference type="GO" id="GO:0103016">
    <property type="term" value="F:tRNA-uridine 2-sulfurtransferase activity"/>
    <property type="evidence" value="ECO:0007669"/>
    <property type="project" value="UniProtKB-EC"/>
</dbReference>
<dbReference type="GO" id="GO:0002143">
    <property type="term" value="P:tRNA wobble position uridine thiolation"/>
    <property type="evidence" value="ECO:0007669"/>
    <property type="project" value="TreeGrafter"/>
</dbReference>
<dbReference type="CDD" id="cd01998">
    <property type="entry name" value="MnmA_TRMU-like"/>
    <property type="match status" value="1"/>
</dbReference>
<dbReference type="FunFam" id="2.30.30.280:FF:000001">
    <property type="entry name" value="tRNA-specific 2-thiouridylase MnmA"/>
    <property type="match status" value="1"/>
</dbReference>
<dbReference type="FunFam" id="2.40.30.10:FF:000023">
    <property type="entry name" value="tRNA-specific 2-thiouridylase MnmA"/>
    <property type="match status" value="1"/>
</dbReference>
<dbReference type="FunFam" id="3.40.50.620:FF:000004">
    <property type="entry name" value="tRNA-specific 2-thiouridylase MnmA"/>
    <property type="match status" value="1"/>
</dbReference>
<dbReference type="Gene3D" id="2.30.30.280">
    <property type="entry name" value="Adenine nucleotide alpha hydrolases-like domains"/>
    <property type="match status" value="1"/>
</dbReference>
<dbReference type="Gene3D" id="3.40.50.620">
    <property type="entry name" value="HUPs"/>
    <property type="match status" value="1"/>
</dbReference>
<dbReference type="Gene3D" id="2.40.30.10">
    <property type="entry name" value="Translation factors"/>
    <property type="match status" value="1"/>
</dbReference>
<dbReference type="HAMAP" id="MF_00144">
    <property type="entry name" value="tRNA_thiouridyl_MnmA"/>
    <property type="match status" value="1"/>
</dbReference>
<dbReference type="InterPro" id="IPR004506">
    <property type="entry name" value="MnmA-like"/>
</dbReference>
<dbReference type="InterPro" id="IPR046885">
    <property type="entry name" value="MnmA-like_C"/>
</dbReference>
<dbReference type="InterPro" id="IPR046884">
    <property type="entry name" value="MnmA-like_central"/>
</dbReference>
<dbReference type="InterPro" id="IPR023382">
    <property type="entry name" value="MnmA-like_central_sf"/>
</dbReference>
<dbReference type="InterPro" id="IPR014729">
    <property type="entry name" value="Rossmann-like_a/b/a_fold"/>
</dbReference>
<dbReference type="NCBIfam" id="NF001138">
    <property type="entry name" value="PRK00143.1"/>
    <property type="match status" value="1"/>
</dbReference>
<dbReference type="NCBIfam" id="TIGR00420">
    <property type="entry name" value="trmU"/>
    <property type="match status" value="1"/>
</dbReference>
<dbReference type="PANTHER" id="PTHR11933:SF5">
    <property type="entry name" value="MITOCHONDRIAL TRNA-SPECIFIC 2-THIOURIDYLASE 1"/>
    <property type="match status" value="1"/>
</dbReference>
<dbReference type="PANTHER" id="PTHR11933">
    <property type="entry name" value="TRNA 5-METHYLAMINOMETHYL-2-THIOURIDYLATE -METHYLTRANSFERASE"/>
    <property type="match status" value="1"/>
</dbReference>
<dbReference type="Pfam" id="PF03054">
    <property type="entry name" value="tRNA_Me_trans"/>
    <property type="match status" value="1"/>
</dbReference>
<dbReference type="Pfam" id="PF20258">
    <property type="entry name" value="tRNA_Me_trans_C"/>
    <property type="match status" value="1"/>
</dbReference>
<dbReference type="Pfam" id="PF20259">
    <property type="entry name" value="tRNA_Me_trans_M"/>
    <property type="match status" value="1"/>
</dbReference>
<dbReference type="SUPFAM" id="SSF52402">
    <property type="entry name" value="Adenine nucleotide alpha hydrolases-like"/>
    <property type="match status" value="1"/>
</dbReference>
<protein>
    <recommendedName>
        <fullName evidence="1">tRNA-specific 2-thiouridylase MnmA</fullName>
        <ecNumber evidence="1">2.8.1.13</ecNumber>
    </recommendedName>
</protein>
<feature type="chain" id="PRO_1000096296" description="tRNA-specific 2-thiouridylase MnmA">
    <location>
        <begin position="1"/>
        <end position="377"/>
    </location>
</feature>
<feature type="region of interest" description="Interaction with target base in tRNA" evidence="1">
    <location>
        <begin position="98"/>
        <end position="100"/>
    </location>
</feature>
<feature type="region of interest" description="Interaction with tRNA" evidence="1">
    <location>
        <begin position="150"/>
        <end position="152"/>
    </location>
</feature>
<feature type="region of interest" description="Interaction with tRNA" evidence="1">
    <location>
        <begin position="314"/>
        <end position="315"/>
    </location>
</feature>
<feature type="active site" description="Nucleophile" evidence="1">
    <location>
        <position position="103"/>
    </location>
</feature>
<feature type="active site" description="Cysteine persulfide intermediate" evidence="1">
    <location>
        <position position="200"/>
    </location>
</feature>
<feature type="binding site" evidence="1">
    <location>
        <begin position="12"/>
        <end position="19"/>
    </location>
    <ligand>
        <name>ATP</name>
        <dbReference type="ChEBI" id="CHEBI:30616"/>
    </ligand>
</feature>
<feature type="binding site" evidence="1">
    <location>
        <position position="38"/>
    </location>
    <ligand>
        <name>ATP</name>
        <dbReference type="ChEBI" id="CHEBI:30616"/>
    </ligand>
</feature>
<feature type="binding site" evidence="1">
    <location>
        <position position="127"/>
    </location>
    <ligand>
        <name>ATP</name>
        <dbReference type="ChEBI" id="CHEBI:30616"/>
    </ligand>
</feature>
<feature type="site" description="Interaction with tRNA" evidence="1">
    <location>
        <position position="128"/>
    </location>
</feature>
<feature type="site" description="Interaction with tRNA" evidence="1">
    <location>
        <position position="348"/>
    </location>
</feature>
<feature type="disulfide bond" description="Alternate" evidence="1">
    <location>
        <begin position="103"/>
        <end position="200"/>
    </location>
</feature>
<keyword id="KW-0067">ATP-binding</keyword>
<keyword id="KW-0963">Cytoplasm</keyword>
<keyword id="KW-1015">Disulfide bond</keyword>
<keyword id="KW-0547">Nucleotide-binding</keyword>
<keyword id="KW-0694">RNA-binding</keyword>
<keyword id="KW-0808">Transferase</keyword>
<keyword id="KW-0819">tRNA processing</keyword>
<keyword id="KW-0820">tRNA-binding</keyword>
<sequence>MADNSHTRVVVGMSGGVDSSVTALLLKRQGYDVVGVFMKNWDDTDENGVCTATEDYKDVAKVASKIGIPYYSVNFEKEYWDRVFKYFIAEYKKGRTPNPDVICNKEIKFKAFIEYANQLGADYVATGHYADVKRDENGRMHLMRAKDQHKDQTYFLSQLDYKQLDKVMFPLAGYTKPEIRKIAEEAGLATADKKDSVGICFIGEDGHFREFLSQYIPAQPGNMETLDGKVVGQHMGLMYYTIGQRRGLGLGGNKESNEPWFVIGKDMKKNVLYVGQGYENSHLYATHLEASDIHWVDDVVSRYGRDFHCTAKFRYRQTDVGVTVHLSDDDQMVTVEFDDPARAITPGQAVVFYDGEECLGSAIIDRAYSHDRQLQYV</sequence>
<accession>B2G6L9</accession>
<proteinExistence type="inferred from homology"/>
<reference key="1">
    <citation type="journal article" date="2008" name="DNA Res.">
        <title>Comparative genome analysis of Lactobacillus reuteri and Lactobacillus fermentum reveal a genomic island for reuterin and cobalamin production.</title>
        <authorList>
            <person name="Morita H."/>
            <person name="Toh H."/>
            <person name="Fukuda S."/>
            <person name="Horikawa H."/>
            <person name="Oshima K."/>
            <person name="Suzuki T."/>
            <person name="Murakami M."/>
            <person name="Hisamatsu S."/>
            <person name="Kato Y."/>
            <person name="Takizawa T."/>
            <person name="Fukuoka H."/>
            <person name="Yoshimura T."/>
            <person name="Itoh K."/>
            <person name="O'Sullivan D.J."/>
            <person name="McKay L.L."/>
            <person name="Ohno H."/>
            <person name="Kikuchi J."/>
            <person name="Masaoka T."/>
            <person name="Hattori M."/>
        </authorList>
    </citation>
    <scope>NUCLEOTIDE SEQUENCE [LARGE SCALE GENOMIC DNA]</scope>
    <source>
        <strain>JCM 1112</strain>
    </source>
</reference>
<name>MNMA_LIMRJ</name>
<comment type="function">
    <text evidence="1">Catalyzes the 2-thiolation of uridine at the wobble position (U34) of tRNA, leading to the formation of s(2)U34.</text>
</comment>
<comment type="catalytic activity">
    <reaction evidence="1">
        <text>S-sulfanyl-L-cysteinyl-[protein] + uridine(34) in tRNA + AH2 + ATP = 2-thiouridine(34) in tRNA + L-cysteinyl-[protein] + A + AMP + diphosphate + H(+)</text>
        <dbReference type="Rhea" id="RHEA:47032"/>
        <dbReference type="Rhea" id="RHEA-COMP:10131"/>
        <dbReference type="Rhea" id="RHEA-COMP:11726"/>
        <dbReference type="Rhea" id="RHEA-COMP:11727"/>
        <dbReference type="Rhea" id="RHEA-COMP:11728"/>
        <dbReference type="ChEBI" id="CHEBI:13193"/>
        <dbReference type="ChEBI" id="CHEBI:15378"/>
        <dbReference type="ChEBI" id="CHEBI:17499"/>
        <dbReference type="ChEBI" id="CHEBI:29950"/>
        <dbReference type="ChEBI" id="CHEBI:30616"/>
        <dbReference type="ChEBI" id="CHEBI:33019"/>
        <dbReference type="ChEBI" id="CHEBI:61963"/>
        <dbReference type="ChEBI" id="CHEBI:65315"/>
        <dbReference type="ChEBI" id="CHEBI:87170"/>
        <dbReference type="ChEBI" id="CHEBI:456215"/>
        <dbReference type="EC" id="2.8.1.13"/>
    </reaction>
</comment>
<comment type="subcellular location">
    <subcellularLocation>
        <location evidence="1">Cytoplasm</location>
    </subcellularLocation>
</comment>
<comment type="similarity">
    <text evidence="1">Belongs to the MnmA/TRMU family.</text>
</comment>